<gene>
    <name evidence="1" type="primary">rpmC</name>
    <name type="ordered locus">CLD_1032</name>
</gene>
<protein>
    <recommendedName>
        <fullName evidence="1">Large ribosomal subunit protein uL29</fullName>
    </recommendedName>
    <alternativeName>
        <fullName evidence="2">50S ribosomal protein L29</fullName>
    </alternativeName>
</protein>
<name>RL29_CLOBK</name>
<proteinExistence type="inferred from homology"/>
<organism>
    <name type="scientific">Clostridium botulinum (strain Okra / Type B1)</name>
    <dbReference type="NCBI Taxonomy" id="498213"/>
    <lineage>
        <taxon>Bacteria</taxon>
        <taxon>Bacillati</taxon>
        <taxon>Bacillota</taxon>
        <taxon>Clostridia</taxon>
        <taxon>Eubacteriales</taxon>
        <taxon>Clostridiaceae</taxon>
        <taxon>Clostridium</taxon>
    </lineage>
</organism>
<accession>B1IGE6</accession>
<comment type="similarity">
    <text evidence="1">Belongs to the universal ribosomal protein uL29 family.</text>
</comment>
<keyword id="KW-0687">Ribonucleoprotein</keyword>
<keyword id="KW-0689">Ribosomal protein</keyword>
<feature type="chain" id="PRO_1000121750" description="Large ribosomal subunit protein uL29">
    <location>
        <begin position="1"/>
        <end position="70"/>
    </location>
</feature>
<evidence type="ECO:0000255" key="1">
    <source>
        <dbReference type="HAMAP-Rule" id="MF_00374"/>
    </source>
</evidence>
<evidence type="ECO:0000305" key="2"/>
<reference key="1">
    <citation type="journal article" date="2007" name="PLoS ONE">
        <title>Analysis of the neurotoxin complex genes in Clostridium botulinum A1-A4 and B1 strains: BoNT/A3, /Ba4 and /B1 clusters are located within plasmids.</title>
        <authorList>
            <person name="Smith T.J."/>
            <person name="Hill K.K."/>
            <person name="Foley B.T."/>
            <person name="Detter J.C."/>
            <person name="Munk A.C."/>
            <person name="Bruce D.C."/>
            <person name="Doggett N.A."/>
            <person name="Smith L.A."/>
            <person name="Marks J.D."/>
            <person name="Xie G."/>
            <person name="Brettin T.S."/>
        </authorList>
    </citation>
    <scope>NUCLEOTIDE SEQUENCE [LARGE SCALE GENOMIC DNA]</scope>
    <source>
        <strain>Okra / Type B1</strain>
    </source>
</reference>
<sequence length="70" mass="8327">MKARELQELRKSSPQELQSKLNDLKAELFNLRFQLATGQLENPMRIREVKKSIAQIKTILREEEIRAYQQ</sequence>
<dbReference type="EMBL" id="CP000939">
    <property type="protein sequence ID" value="ACA45810.1"/>
    <property type="molecule type" value="Genomic_DNA"/>
</dbReference>
<dbReference type="RefSeq" id="WP_003357691.1">
    <property type="nucleotide sequence ID" value="NC_010516.1"/>
</dbReference>
<dbReference type="SMR" id="B1IGE6"/>
<dbReference type="GeneID" id="92940242"/>
<dbReference type="KEGG" id="cbb:CLD_1032"/>
<dbReference type="HOGENOM" id="CLU_158491_5_2_9"/>
<dbReference type="Proteomes" id="UP000008541">
    <property type="component" value="Chromosome"/>
</dbReference>
<dbReference type="GO" id="GO:0022625">
    <property type="term" value="C:cytosolic large ribosomal subunit"/>
    <property type="evidence" value="ECO:0007669"/>
    <property type="project" value="TreeGrafter"/>
</dbReference>
<dbReference type="GO" id="GO:0003735">
    <property type="term" value="F:structural constituent of ribosome"/>
    <property type="evidence" value="ECO:0007669"/>
    <property type="project" value="InterPro"/>
</dbReference>
<dbReference type="GO" id="GO:0006412">
    <property type="term" value="P:translation"/>
    <property type="evidence" value="ECO:0007669"/>
    <property type="project" value="UniProtKB-UniRule"/>
</dbReference>
<dbReference type="CDD" id="cd00427">
    <property type="entry name" value="Ribosomal_L29_HIP"/>
    <property type="match status" value="1"/>
</dbReference>
<dbReference type="FunFam" id="1.10.287.310:FF:000001">
    <property type="entry name" value="50S ribosomal protein L29"/>
    <property type="match status" value="1"/>
</dbReference>
<dbReference type="Gene3D" id="1.10.287.310">
    <property type="match status" value="1"/>
</dbReference>
<dbReference type="HAMAP" id="MF_00374">
    <property type="entry name" value="Ribosomal_uL29"/>
    <property type="match status" value="1"/>
</dbReference>
<dbReference type="InterPro" id="IPR050063">
    <property type="entry name" value="Ribosomal_protein_uL29"/>
</dbReference>
<dbReference type="InterPro" id="IPR001854">
    <property type="entry name" value="Ribosomal_uL29"/>
</dbReference>
<dbReference type="InterPro" id="IPR018254">
    <property type="entry name" value="Ribosomal_uL29_CS"/>
</dbReference>
<dbReference type="InterPro" id="IPR036049">
    <property type="entry name" value="Ribosomal_uL29_sf"/>
</dbReference>
<dbReference type="NCBIfam" id="TIGR00012">
    <property type="entry name" value="L29"/>
    <property type="match status" value="1"/>
</dbReference>
<dbReference type="PANTHER" id="PTHR10916">
    <property type="entry name" value="60S RIBOSOMAL PROTEIN L35/50S RIBOSOMAL PROTEIN L29"/>
    <property type="match status" value="1"/>
</dbReference>
<dbReference type="PANTHER" id="PTHR10916:SF0">
    <property type="entry name" value="LARGE RIBOSOMAL SUBUNIT PROTEIN UL29C"/>
    <property type="match status" value="1"/>
</dbReference>
<dbReference type="Pfam" id="PF00831">
    <property type="entry name" value="Ribosomal_L29"/>
    <property type="match status" value="1"/>
</dbReference>
<dbReference type="SUPFAM" id="SSF46561">
    <property type="entry name" value="Ribosomal protein L29 (L29p)"/>
    <property type="match status" value="1"/>
</dbReference>
<dbReference type="PROSITE" id="PS00579">
    <property type="entry name" value="RIBOSOMAL_L29"/>
    <property type="match status" value="1"/>
</dbReference>